<name>THIG_BRASO</name>
<evidence type="ECO:0000255" key="1">
    <source>
        <dbReference type="HAMAP-Rule" id="MF_00443"/>
    </source>
</evidence>
<feature type="chain" id="PRO_1000025997" description="Thiazole synthase">
    <location>
        <begin position="1"/>
        <end position="260"/>
    </location>
</feature>
<feature type="active site" description="Schiff-base intermediate with DXP" evidence="1">
    <location>
        <position position="96"/>
    </location>
</feature>
<feature type="binding site" evidence="1">
    <location>
        <position position="157"/>
    </location>
    <ligand>
        <name>1-deoxy-D-xylulose 5-phosphate</name>
        <dbReference type="ChEBI" id="CHEBI:57792"/>
    </ligand>
</feature>
<feature type="binding site" evidence="1">
    <location>
        <begin position="184"/>
        <end position="185"/>
    </location>
    <ligand>
        <name>1-deoxy-D-xylulose 5-phosphate</name>
        <dbReference type="ChEBI" id="CHEBI:57792"/>
    </ligand>
</feature>
<feature type="binding site" evidence="1">
    <location>
        <begin position="206"/>
        <end position="207"/>
    </location>
    <ligand>
        <name>1-deoxy-D-xylulose 5-phosphate</name>
        <dbReference type="ChEBI" id="CHEBI:57792"/>
    </ligand>
</feature>
<organism>
    <name type="scientific">Bradyrhizobium sp. (strain ORS 278)</name>
    <dbReference type="NCBI Taxonomy" id="114615"/>
    <lineage>
        <taxon>Bacteria</taxon>
        <taxon>Pseudomonadati</taxon>
        <taxon>Pseudomonadota</taxon>
        <taxon>Alphaproteobacteria</taxon>
        <taxon>Hyphomicrobiales</taxon>
        <taxon>Nitrobacteraceae</taxon>
        <taxon>Bradyrhizobium</taxon>
    </lineage>
</organism>
<reference key="1">
    <citation type="journal article" date="2007" name="Science">
        <title>Legumes symbioses: absence of nod genes in photosynthetic bradyrhizobia.</title>
        <authorList>
            <person name="Giraud E."/>
            <person name="Moulin L."/>
            <person name="Vallenet D."/>
            <person name="Barbe V."/>
            <person name="Cytryn E."/>
            <person name="Avarre J.-C."/>
            <person name="Jaubert M."/>
            <person name="Simon D."/>
            <person name="Cartieaux F."/>
            <person name="Prin Y."/>
            <person name="Bena G."/>
            <person name="Hannibal L."/>
            <person name="Fardoux J."/>
            <person name="Kojadinovic M."/>
            <person name="Vuillet L."/>
            <person name="Lajus A."/>
            <person name="Cruveiller S."/>
            <person name="Rouy Z."/>
            <person name="Mangenot S."/>
            <person name="Segurens B."/>
            <person name="Dossat C."/>
            <person name="Franck W.L."/>
            <person name="Chang W.-S."/>
            <person name="Saunders E."/>
            <person name="Bruce D."/>
            <person name="Richardson P."/>
            <person name="Normand P."/>
            <person name="Dreyfus B."/>
            <person name="Pignol D."/>
            <person name="Stacey G."/>
            <person name="Emerich D."/>
            <person name="Vermeglio A."/>
            <person name="Medigue C."/>
            <person name="Sadowsky M."/>
        </authorList>
    </citation>
    <scope>NUCLEOTIDE SEQUENCE [LARGE SCALE GENOMIC DNA]</scope>
    <source>
        <strain>ORS 278</strain>
    </source>
</reference>
<accession>A4YZQ4</accession>
<proteinExistence type="inferred from homology"/>
<sequence>MLKFYDKTVTSRLLIGTALYPSPAIMQDAIRASGAEIVTVSLRREAAGGKTGDAFWKLINELNVTVLPNTAGCRSVREAVTTAKLARELFGTSWIKLEVIGDNDTLQPDVIGLVEAATILIKDGFEVFPYCTEDLTVATRLVDAGCRVVMPWAAPIGSAKGIINRDALKLLRDRLPDITLVVDAGLGAPSHAAGALELGYDAVLLNTAIAKAADPVAMARAFRLGVEAGRTAYEAGLMDARDFASPSTPVVGTPFWHAVS</sequence>
<protein>
    <recommendedName>
        <fullName evidence="1">Thiazole synthase</fullName>
        <ecNumber evidence="1">2.8.1.10</ecNumber>
    </recommendedName>
</protein>
<dbReference type="EC" id="2.8.1.10" evidence="1"/>
<dbReference type="EMBL" id="CU234118">
    <property type="protein sequence ID" value="CAL79380.1"/>
    <property type="molecule type" value="Genomic_DNA"/>
</dbReference>
<dbReference type="RefSeq" id="WP_012029286.1">
    <property type="nucleotide sequence ID" value="NC_009445.1"/>
</dbReference>
<dbReference type="SMR" id="A4YZQ4"/>
<dbReference type="STRING" id="114615.BRADO5711"/>
<dbReference type="KEGG" id="bra:BRADO5711"/>
<dbReference type="eggNOG" id="COG2022">
    <property type="taxonomic scope" value="Bacteria"/>
</dbReference>
<dbReference type="HOGENOM" id="CLU_062233_1_0_5"/>
<dbReference type="OrthoDB" id="9805935at2"/>
<dbReference type="UniPathway" id="UPA00060"/>
<dbReference type="Proteomes" id="UP000001994">
    <property type="component" value="Chromosome"/>
</dbReference>
<dbReference type="GO" id="GO:0005737">
    <property type="term" value="C:cytoplasm"/>
    <property type="evidence" value="ECO:0007669"/>
    <property type="project" value="UniProtKB-SubCell"/>
</dbReference>
<dbReference type="GO" id="GO:1990107">
    <property type="term" value="F:thiazole synthase activity"/>
    <property type="evidence" value="ECO:0007669"/>
    <property type="project" value="UniProtKB-EC"/>
</dbReference>
<dbReference type="GO" id="GO:0009229">
    <property type="term" value="P:thiamine diphosphate biosynthetic process"/>
    <property type="evidence" value="ECO:0007669"/>
    <property type="project" value="UniProtKB-UniRule"/>
</dbReference>
<dbReference type="CDD" id="cd04728">
    <property type="entry name" value="ThiG"/>
    <property type="match status" value="1"/>
</dbReference>
<dbReference type="Gene3D" id="3.20.20.70">
    <property type="entry name" value="Aldolase class I"/>
    <property type="match status" value="1"/>
</dbReference>
<dbReference type="HAMAP" id="MF_00443">
    <property type="entry name" value="ThiG"/>
    <property type="match status" value="1"/>
</dbReference>
<dbReference type="InterPro" id="IPR013785">
    <property type="entry name" value="Aldolase_TIM"/>
</dbReference>
<dbReference type="InterPro" id="IPR033983">
    <property type="entry name" value="Thiazole_synthase_ThiG"/>
</dbReference>
<dbReference type="InterPro" id="IPR008867">
    <property type="entry name" value="ThiG"/>
</dbReference>
<dbReference type="PANTHER" id="PTHR34266">
    <property type="entry name" value="THIAZOLE SYNTHASE"/>
    <property type="match status" value="1"/>
</dbReference>
<dbReference type="PANTHER" id="PTHR34266:SF2">
    <property type="entry name" value="THIAZOLE SYNTHASE"/>
    <property type="match status" value="1"/>
</dbReference>
<dbReference type="Pfam" id="PF05690">
    <property type="entry name" value="ThiG"/>
    <property type="match status" value="1"/>
</dbReference>
<dbReference type="SUPFAM" id="SSF110399">
    <property type="entry name" value="ThiG-like"/>
    <property type="match status" value="1"/>
</dbReference>
<keyword id="KW-0963">Cytoplasm</keyword>
<keyword id="KW-1185">Reference proteome</keyword>
<keyword id="KW-0704">Schiff base</keyword>
<keyword id="KW-0784">Thiamine biosynthesis</keyword>
<keyword id="KW-0808">Transferase</keyword>
<gene>
    <name evidence="1" type="primary">thiG</name>
    <name type="ordered locus">BRADO5711</name>
</gene>
<comment type="function">
    <text evidence="1">Catalyzes the rearrangement of 1-deoxy-D-xylulose 5-phosphate (DXP) to produce the thiazole phosphate moiety of thiamine. Sulfur is provided by the thiocarboxylate moiety of the carrier protein ThiS. In vitro, sulfur can be provided by H(2)S.</text>
</comment>
<comment type="catalytic activity">
    <reaction evidence="1">
        <text>[ThiS sulfur-carrier protein]-C-terminal-Gly-aminoethanethioate + 2-iminoacetate + 1-deoxy-D-xylulose 5-phosphate = [ThiS sulfur-carrier protein]-C-terminal Gly-Gly + 2-[(2R,5Z)-2-carboxy-4-methylthiazol-5(2H)-ylidene]ethyl phosphate + 2 H2O + H(+)</text>
        <dbReference type="Rhea" id="RHEA:26297"/>
        <dbReference type="Rhea" id="RHEA-COMP:12909"/>
        <dbReference type="Rhea" id="RHEA-COMP:19908"/>
        <dbReference type="ChEBI" id="CHEBI:15377"/>
        <dbReference type="ChEBI" id="CHEBI:15378"/>
        <dbReference type="ChEBI" id="CHEBI:57792"/>
        <dbReference type="ChEBI" id="CHEBI:62899"/>
        <dbReference type="ChEBI" id="CHEBI:77846"/>
        <dbReference type="ChEBI" id="CHEBI:90778"/>
        <dbReference type="ChEBI" id="CHEBI:232372"/>
        <dbReference type="EC" id="2.8.1.10"/>
    </reaction>
</comment>
<comment type="pathway">
    <text evidence="1">Cofactor biosynthesis; thiamine diphosphate biosynthesis.</text>
</comment>
<comment type="subunit">
    <text evidence="1">Homotetramer. Forms heterodimers with either ThiH or ThiS.</text>
</comment>
<comment type="subcellular location">
    <subcellularLocation>
        <location evidence="1">Cytoplasm</location>
    </subcellularLocation>
</comment>
<comment type="similarity">
    <text evidence="1">Belongs to the ThiG family.</text>
</comment>